<gene>
    <name evidence="8" type="primary">ptaA</name>
    <name type="ORF">PFICI_10824</name>
</gene>
<accession>A0A067XNI2</accession>
<accession>W3WSW2</accession>
<organism>
    <name type="scientific">Pestalotiopsis fici (strain W106-1 / CGMCC3.15140)</name>
    <dbReference type="NCBI Taxonomy" id="1229662"/>
    <lineage>
        <taxon>Eukaryota</taxon>
        <taxon>Fungi</taxon>
        <taxon>Dikarya</taxon>
        <taxon>Ascomycota</taxon>
        <taxon>Pezizomycotina</taxon>
        <taxon>Sordariomycetes</taxon>
        <taxon>Xylariomycetidae</taxon>
        <taxon>Amphisphaeriales</taxon>
        <taxon>Sporocadaceae</taxon>
        <taxon>Pestalotiopsis</taxon>
    </lineage>
</organism>
<protein>
    <recommendedName>
        <fullName evidence="8">Non-reducing polyketide synthase ptaA</fullName>
        <ecNumber evidence="10">2.3.1.-</ecNumber>
    </recommendedName>
    <alternativeName>
        <fullName evidence="8">Pestheic acid biosynthesis cluster protein A</fullName>
    </alternativeName>
</protein>
<comment type="function">
    <text evidence="6">Non-reducing polyketide synthase; part of the gene cluster that mediates the biosynthesis of pestheic acid, a diphenyl ether which is a biosynthetic precursor of the unique chloropupukeananes (PubMed:24302702). The biosynthesis initiates from condensation of acetate and malonate units catalyzed by the non-reducing PKS ptaA (PubMed:24302702). As the ptaA protein is TE/CLC domain-deficient, hydrolysis and Claisen cyclization of the polyketide could be catalyzed by ptaB containing a beta-lactamase domain (PubMed:24302702). The ptaB protein might hydrolyze the thioester bond between the ACP of ptaA and the intermediate to release atrochrysone carboxylic acid, which is spontaneously dehydrated to form endocrocin anthrone (PubMed:24302702). Endocrocin anthrone is then converted to endocrocin, catalyzed by the anthrone oxygenase ptaC (PubMed:24302702). Spontaneous decarboxylation of endocrocin occurs to generate emodin (PubMed:24302702). An O-methyltransferase (ptaH or ptaI) could methylate emodin to form physcion (PubMed:24302702). PtaJ could then catalyze the oxidative cleavage of physcion, and rotation of the intermediate could then afford desmethylisosulochrin (PubMed:24302702). PtaF, a putative NADH-dependent oxidoreductase, might also participate in the oxidative cleavage step (PubMed:24302702). Desmethylisosulochrin is then transformed by another O-methyltransferase (ptaH or ptaI) to form isosulochrin (PubMed:24302702). Chlorination of isosulochrin by ptaM in the cyclohexadienone B ring then produces chloroisosulochrin (PubMed:24302702). PtaE is responsible for the oxidative coupling reactions of both benzophenones isosulochrin and chloroisosulochrin to RES-1214-1 and pestheic acid respectively, regardless of chlorination.</text>
</comment>
<comment type="catalytic activity">
    <reaction evidence="10">
        <text>holo-[ACP] + 8 malonyl-CoA + 8 H(+) = atrochrysone carboxyl-[ACP] + 8 CO2 + 8 CoA + 2 H2O</text>
        <dbReference type="Rhea" id="RHEA:64232"/>
        <dbReference type="Rhea" id="RHEA-COMP:9685"/>
        <dbReference type="Rhea" id="RHEA-COMP:16552"/>
        <dbReference type="ChEBI" id="CHEBI:15377"/>
        <dbReference type="ChEBI" id="CHEBI:15378"/>
        <dbReference type="ChEBI" id="CHEBI:16526"/>
        <dbReference type="ChEBI" id="CHEBI:57287"/>
        <dbReference type="ChEBI" id="CHEBI:57384"/>
        <dbReference type="ChEBI" id="CHEBI:64479"/>
        <dbReference type="ChEBI" id="CHEBI:149712"/>
    </reaction>
    <physiologicalReaction direction="left-to-right" evidence="10">
        <dbReference type="Rhea" id="RHEA:64233"/>
    </physiologicalReaction>
</comment>
<comment type="pathway">
    <text evidence="6">Secondary metabolite biosynthesis.</text>
</comment>
<comment type="induction">
    <text evidence="6 7">The cluster is expressed in rice fermentation medium (PubMed:25623211). Expression is correlated with the production of pestheic acid (PubMed:24302702). Three regulators are located in the cluster (ptaR1, ptaR2 and ptaR3), suggesting that the production of pestheic acid is controlled by a complex regulatory mechanism (PubMed:24302702).</text>
</comment>
<comment type="domain">
    <text evidence="1">Multidomain protein; including a starter unit:ACP transacylase (SAT) that selects the starter unit; a ketosynthase (KS) that catalyzes repeated decarboxylative condensation to elongate the polyketide backbone; a malonyl-CoA:ACP transacylase (MAT) that selects and transfers the extender unit malonyl-CoA; a product template (PT) domain that controls the immediate cyclization regioselectivity of the reactive polyketide backbone; and an acyl-carrier protein (ACP) that serves as the tether of the growing and completed polyketide via its phosphopantetheinyl arm (By similarity).</text>
</comment>
<comment type="disruption phenotype">
    <text evidence="6">Totally abolishes the production of pestheic acid but does not affect the production iso-A82775C, another precursor of chloropupukeananes (PubMed:24302702).</text>
</comment>
<comment type="sequence caution" evidence="9">
    <conflict type="erroneous gene model prediction">
        <sequence resource="EMBL-CDS" id="ETS76950"/>
    </conflict>
</comment>
<feature type="chain" id="PRO_0000443038" description="Non-reducing polyketide synthase ptaA">
    <location>
        <begin position="1"/>
        <end position="1746"/>
    </location>
</feature>
<feature type="domain" description="Ketosynthase family 3 (KS3)" evidence="4">
    <location>
        <begin position="361"/>
        <end position="796"/>
    </location>
</feature>
<feature type="domain" description="PKS/mFAS DH" evidence="5">
    <location>
        <begin position="1290"/>
        <end position="1600"/>
    </location>
</feature>
<feature type="domain" description="Carrier" evidence="3">
    <location>
        <begin position="1671"/>
        <end position="1745"/>
    </location>
</feature>
<feature type="region of interest" description="N-terminal acylcarrier protein transacylase domain (SAT)" evidence="2">
    <location>
        <begin position="4"/>
        <end position="227"/>
    </location>
</feature>
<feature type="region of interest" description="Malonyl-CoA:ACP transacylase (MAT) domain" evidence="2">
    <location>
        <begin position="898"/>
        <end position="1218"/>
    </location>
</feature>
<feature type="region of interest" description="Product template (PT) domain" evidence="2">
    <location>
        <begin position="1286"/>
        <end position="1605"/>
    </location>
</feature>
<feature type="region of interest" description="N-terminal hotdog fold" evidence="5">
    <location>
        <begin position="1290"/>
        <end position="1425"/>
    </location>
</feature>
<feature type="region of interest" description="C-terminal hotdog fold" evidence="5">
    <location>
        <begin position="1452"/>
        <end position="1600"/>
    </location>
</feature>
<feature type="active site" description="For beta-ketoacyl synthase activity" evidence="4">
    <location>
        <position position="534"/>
    </location>
</feature>
<feature type="active site" description="For beta-ketoacyl synthase activity" evidence="4">
    <location>
        <position position="670"/>
    </location>
</feature>
<feature type="active site" description="For beta-ketoacyl synthase activity" evidence="4">
    <location>
        <position position="714"/>
    </location>
</feature>
<feature type="active site" description="Proton acceptor; for dehydratase activity" evidence="5">
    <location>
        <position position="1322"/>
    </location>
</feature>
<feature type="active site" description="Proton donor; for dehydratase activity" evidence="5">
    <location>
        <position position="1511"/>
    </location>
</feature>
<feature type="modified residue" description="O-(pantetheine 4'-phosphoryl)serine" evidence="3">
    <location>
        <position position="1705"/>
    </location>
</feature>
<evidence type="ECO:0000250" key="1">
    <source>
        <dbReference type="UniProtKB" id="Q5B0D0"/>
    </source>
</evidence>
<evidence type="ECO:0000255" key="2"/>
<evidence type="ECO:0000255" key="3">
    <source>
        <dbReference type="PROSITE-ProRule" id="PRU00258"/>
    </source>
</evidence>
<evidence type="ECO:0000255" key="4">
    <source>
        <dbReference type="PROSITE-ProRule" id="PRU01348"/>
    </source>
</evidence>
<evidence type="ECO:0000255" key="5">
    <source>
        <dbReference type="PROSITE-ProRule" id="PRU01363"/>
    </source>
</evidence>
<evidence type="ECO:0000269" key="6">
    <source>
    </source>
</evidence>
<evidence type="ECO:0000269" key="7">
    <source>
    </source>
</evidence>
<evidence type="ECO:0000303" key="8">
    <source>
    </source>
</evidence>
<evidence type="ECO:0000305" key="9"/>
<evidence type="ECO:0000305" key="10">
    <source>
    </source>
</evidence>
<dbReference type="EC" id="2.3.1.-" evidence="10"/>
<dbReference type="EMBL" id="KC145148">
    <property type="protein sequence ID" value="AGO59040.1"/>
    <property type="molecule type" value="Genomic_DNA"/>
</dbReference>
<dbReference type="EMBL" id="KI912116">
    <property type="protein sequence ID" value="ETS76950.1"/>
    <property type="status" value="ALT_SEQ"/>
    <property type="molecule type" value="Genomic_DNA"/>
</dbReference>
<dbReference type="RefSeq" id="XP_007837596.1">
    <property type="nucleotide sequence ID" value="XM_007839405.1"/>
</dbReference>
<dbReference type="SMR" id="A0A067XNI2"/>
<dbReference type="STRING" id="1229662.A0A067XNI2"/>
<dbReference type="GeneID" id="19275837"/>
<dbReference type="KEGG" id="pfy:PFICI_10824"/>
<dbReference type="eggNOG" id="KOG1202">
    <property type="taxonomic scope" value="Eukaryota"/>
</dbReference>
<dbReference type="InParanoid" id="A0A067XNI2"/>
<dbReference type="OrthoDB" id="329835at2759"/>
<dbReference type="Proteomes" id="UP000030651">
    <property type="component" value="Unassembled WGS sequence"/>
</dbReference>
<dbReference type="GO" id="GO:0004315">
    <property type="term" value="F:3-oxoacyl-[acyl-carrier-protein] synthase activity"/>
    <property type="evidence" value="ECO:0007669"/>
    <property type="project" value="InterPro"/>
</dbReference>
<dbReference type="GO" id="GO:0004312">
    <property type="term" value="F:fatty acid synthase activity"/>
    <property type="evidence" value="ECO:0007669"/>
    <property type="project" value="TreeGrafter"/>
</dbReference>
<dbReference type="GO" id="GO:0031177">
    <property type="term" value="F:phosphopantetheine binding"/>
    <property type="evidence" value="ECO:0007669"/>
    <property type="project" value="InterPro"/>
</dbReference>
<dbReference type="GO" id="GO:0006633">
    <property type="term" value="P:fatty acid biosynthetic process"/>
    <property type="evidence" value="ECO:0007669"/>
    <property type="project" value="InterPro"/>
</dbReference>
<dbReference type="GO" id="GO:0044550">
    <property type="term" value="P:secondary metabolite biosynthetic process"/>
    <property type="evidence" value="ECO:0007669"/>
    <property type="project" value="TreeGrafter"/>
</dbReference>
<dbReference type="CDD" id="cd00833">
    <property type="entry name" value="PKS"/>
    <property type="match status" value="1"/>
</dbReference>
<dbReference type="FunFam" id="3.40.366.10:FF:000002">
    <property type="entry name" value="Probable polyketide synthase 2"/>
    <property type="match status" value="1"/>
</dbReference>
<dbReference type="FunFam" id="1.10.1200.10:FF:000011">
    <property type="entry name" value="Sterigmatocystin biosynthesis polyketide synthase"/>
    <property type="match status" value="1"/>
</dbReference>
<dbReference type="FunFam" id="3.10.129.110:FF:000001">
    <property type="entry name" value="Sterigmatocystin biosynthesis polyketide synthase"/>
    <property type="match status" value="1"/>
</dbReference>
<dbReference type="FunFam" id="3.40.47.10:FF:000031">
    <property type="entry name" value="Sterigmatocystin biosynthesis polyketide synthase"/>
    <property type="match status" value="1"/>
</dbReference>
<dbReference type="Gene3D" id="3.30.70.3290">
    <property type="match status" value="1"/>
</dbReference>
<dbReference type="Gene3D" id="3.40.47.10">
    <property type="match status" value="1"/>
</dbReference>
<dbReference type="Gene3D" id="1.10.1200.10">
    <property type="entry name" value="ACP-like"/>
    <property type="match status" value="1"/>
</dbReference>
<dbReference type="Gene3D" id="3.40.366.10">
    <property type="entry name" value="Malonyl-Coenzyme A Acyl Carrier Protein, domain 2"/>
    <property type="match status" value="2"/>
</dbReference>
<dbReference type="Gene3D" id="3.10.129.110">
    <property type="entry name" value="Polyketide synthase dehydratase"/>
    <property type="match status" value="1"/>
</dbReference>
<dbReference type="InterPro" id="IPR001227">
    <property type="entry name" value="Ac_transferase_dom_sf"/>
</dbReference>
<dbReference type="InterPro" id="IPR036736">
    <property type="entry name" value="ACP-like_sf"/>
</dbReference>
<dbReference type="InterPro" id="IPR014043">
    <property type="entry name" value="Acyl_transferase_dom"/>
</dbReference>
<dbReference type="InterPro" id="IPR016035">
    <property type="entry name" value="Acyl_Trfase/lysoPLipase"/>
</dbReference>
<dbReference type="InterPro" id="IPR018201">
    <property type="entry name" value="Ketoacyl_synth_AS"/>
</dbReference>
<dbReference type="InterPro" id="IPR014031">
    <property type="entry name" value="Ketoacyl_synth_C"/>
</dbReference>
<dbReference type="InterPro" id="IPR014030">
    <property type="entry name" value="Ketoacyl_synth_N"/>
</dbReference>
<dbReference type="InterPro" id="IPR016036">
    <property type="entry name" value="Malonyl_transacylase_ACP-bd"/>
</dbReference>
<dbReference type="InterPro" id="IPR020841">
    <property type="entry name" value="PKS_Beta-ketoAc_synthase_dom"/>
</dbReference>
<dbReference type="InterPro" id="IPR042104">
    <property type="entry name" value="PKS_dehydratase_sf"/>
</dbReference>
<dbReference type="InterPro" id="IPR049551">
    <property type="entry name" value="PKS_DH_C"/>
</dbReference>
<dbReference type="InterPro" id="IPR049900">
    <property type="entry name" value="PKS_mFAS_DH"/>
</dbReference>
<dbReference type="InterPro" id="IPR050091">
    <property type="entry name" value="PKS_NRPS_Biosynth_Enz"/>
</dbReference>
<dbReference type="InterPro" id="IPR020806">
    <property type="entry name" value="PKS_PP-bd"/>
</dbReference>
<dbReference type="InterPro" id="IPR009081">
    <property type="entry name" value="PP-bd_ACP"/>
</dbReference>
<dbReference type="InterPro" id="IPR030918">
    <property type="entry name" value="PT_fungal_PKS"/>
</dbReference>
<dbReference type="InterPro" id="IPR032088">
    <property type="entry name" value="SAT"/>
</dbReference>
<dbReference type="InterPro" id="IPR016039">
    <property type="entry name" value="Thiolase-like"/>
</dbReference>
<dbReference type="NCBIfam" id="TIGR04532">
    <property type="entry name" value="PT_fungal_PKS"/>
    <property type="match status" value="1"/>
</dbReference>
<dbReference type="PANTHER" id="PTHR43775">
    <property type="entry name" value="FATTY ACID SYNTHASE"/>
    <property type="match status" value="1"/>
</dbReference>
<dbReference type="PANTHER" id="PTHR43775:SF37">
    <property type="entry name" value="SI:DKEY-61P9.11"/>
    <property type="match status" value="1"/>
</dbReference>
<dbReference type="Pfam" id="PF00698">
    <property type="entry name" value="Acyl_transf_1"/>
    <property type="match status" value="1"/>
</dbReference>
<dbReference type="Pfam" id="PF22621">
    <property type="entry name" value="CurL-like_PKS_C"/>
    <property type="match status" value="1"/>
</dbReference>
<dbReference type="Pfam" id="PF00109">
    <property type="entry name" value="ketoacyl-synt"/>
    <property type="match status" value="1"/>
</dbReference>
<dbReference type="Pfam" id="PF02801">
    <property type="entry name" value="Ketoacyl-synt_C"/>
    <property type="match status" value="1"/>
</dbReference>
<dbReference type="Pfam" id="PF00550">
    <property type="entry name" value="PP-binding"/>
    <property type="match status" value="1"/>
</dbReference>
<dbReference type="Pfam" id="PF14765">
    <property type="entry name" value="PS-DH"/>
    <property type="match status" value="1"/>
</dbReference>
<dbReference type="Pfam" id="PF16073">
    <property type="entry name" value="SAT"/>
    <property type="match status" value="1"/>
</dbReference>
<dbReference type="SMART" id="SM00827">
    <property type="entry name" value="PKS_AT"/>
    <property type="match status" value="1"/>
</dbReference>
<dbReference type="SMART" id="SM00825">
    <property type="entry name" value="PKS_KS"/>
    <property type="match status" value="1"/>
</dbReference>
<dbReference type="SMART" id="SM00823">
    <property type="entry name" value="PKS_PP"/>
    <property type="match status" value="1"/>
</dbReference>
<dbReference type="SUPFAM" id="SSF47336">
    <property type="entry name" value="ACP-like"/>
    <property type="match status" value="1"/>
</dbReference>
<dbReference type="SUPFAM" id="SSF52151">
    <property type="entry name" value="FabD/lysophospholipase-like"/>
    <property type="match status" value="1"/>
</dbReference>
<dbReference type="SUPFAM" id="SSF55048">
    <property type="entry name" value="Probable ACP-binding domain of malonyl-CoA ACP transacylase"/>
    <property type="match status" value="1"/>
</dbReference>
<dbReference type="SUPFAM" id="SSF53901">
    <property type="entry name" value="Thiolase-like"/>
    <property type="match status" value="1"/>
</dbReference>
<dbReference type="PROSITE" id="PS50075">
    <property type="entry name" value="CARRIER"/>
    <property type="match status" value="1"/>
</dbReference>
<dbReference type="PROSITE" id="PS00606">
    <property type="entry name" value="KS3_1"/>
    <property type="match status" value="1"/>
</dbReference>
<dbReference type="PROSITE" id="PS52004">
    <property type="entry name" value="KS3_2"/>
    <property type="match status" value="1"/>
</dbReference>
<dbReference type="PROSITE" id="PS52019">
    <property type="entry name" value="PKS_MFAS_DH"/>
    <property type="match status" value="1"/>
</dbReference>
<reference key="1">
    <citation type="journal article" date="2014" name="ChemBioChem">
        <title>Identification of the first diphenyl ether gene cluster for pestheic acid biosynthesis in plant endophyte Pestalotiopsis fici.</title>
        <authorList>
            <person name="Xu X."/>
            <person name="Liu L."/>
            <person name="Zhang F."/>
            <person name="Wang W."/>
            <person name="Li J."/>
            <person name="Guo L."/>
            <person name="Che Y."/>
            <person name="Liu G."/>
        </authorList>
    </citation>
    <scope>NUCLEOTIDE SEQUENCE [GENOMIC DNA]</scope>
    <scope>FUNCTION</scope>
    <scope>DISRUPTION PHENOTYPE</scope>
    <scope>INDUCTION</scope>
    <source>
        <strain>W106-1 / CGMCC3.15140</strain>
    </source>
</reference>
<reference key="2">
    <citation type="journal article" date="2015" name="BMC Genomics">
        <title>Genomic and transcriptomic analysis of the endophytic fungus Pestalotiopsis fici reveals its lifestyle and high potential for synthesis of natural products.</title>
        <authorList>
            <person name="Wang X."/>
            <person name="Zhang X."/>
            <person name="Liu L."/>
            <person name="Xiang M."/>
            <person name="Wang W."/>
            <person name="Sun X."/>
            <person name="Che Y."/>
            <person name="Guo L."/>
            <person name="Liu G."/>
            <person name="Guo L."/>
            <person name="Wang C."/>
            <person name="Yin W.B."/>
            <person name="Stadler M."/>
            <person name="Zhang X."/>
            <person name="Liu X."/>
        </authorList>
    </citation>
    <scope>NUCLEOTIDE SEQUENCE [LARGE SCALE GENOMIC DNA]</scope>
    <scope>INDUCTION</scope>
    <source>
        <strain>W106-1 / CGMCC3.15140</strain>
    </source>
</reference>
<keyword id="KW-0511">Multifunctional enzyme</keyword>
<keyword id="KW-0596">Phosphopantetheine</keyword>
<keyword id="KW-0597">Phosphoprotein</keyword>
<keyword id="KW-1185">Reference proteome</keyword>
<keyword id="KW-0808">Transferase</keyword>
<proteinExistence type="evidence at transcript level"/>
<name>PTAA_PESFW</name>
<sequence>MSDNSGSGTSPWGSLNTPVGPPKVTLAYFSNEFPPDDLNFIVRKLFDRTSKGPFCSIDGVLLCAIQFANLIGHYETTDHLFPFGSSIASVAGLGIGLVAAAAVSVTPSLADLPVAGAEAVRIAFRLGVLVDGVSQNLQPRDRSTTGTPDSWAYVIPDVSPEVVQKELDEIHSREKTPIPSKIFVSALSRTSVTISGPPARLRSLFRLSDFFRDRKFVALPVYGGLCHAGHIYEQRHVQEVVEKSVLDETHVRYSPSVRLFSTSTGKPFLSTSVTNLFEQVVGEILTQKIQWDKVVKGVLERIQELSATEVEVLVFRDSLPVHELVKALKSADSGLQTTTEDLLQWLHQSRERLQGPRGSLQSKIAIVGMSCRMPSGATDTEKFWELLEKGLDVHRKIPADRFDVETHHDPTGKRVNTSITPYGCFIDEPGLFDAGFFNMSPREAQQTDPMQRLALVTAYEALERAGYVANRTSATNLHRIGTFYGQASDDYREVNTAQEISTYFIPGGCRAFGPGRINYFFKFSGPSYSIDTACSSSLATIQAACTSLWNGDTDTVVAGGMNVLTNSDAFAGLGNGHFLSKTPNACKTWDCEADGYCRADGIGSIVMKRLEDAEADNDNILGVILGAGTNHSADAISITHPHAPSQAFLYRQILRDAALDPFDVSFVEMHGTGTQAGDSEEMQSVTEVFAPIANKRRTSKQPLHIGAVKSNVGHGEAVAGVTALIKVLLMFQKEAIPPHAGIKNSINPGFPKDLDKRNINIPYQKTAWPRSTDRKRIAVVNNFSAAGGNTTIAIEEGPLRQTIGHDPRTTHLIPISAKSKVSLKGNIQRLIDYLEVSPDVSLADLSYSLTARRYHHSHRVAITTSDVAHLKKQLRSQLDSADSHKPIVAAAGPPPVAFAFTGQGASYGTMDLELYHESKYFRDQILQLDSFAQGQGFPSFVPAIDGSFPKEHTHRPVVTQLALLCTEIALAKYWASLGVKPDVVIGHSLGEYAALHVAGVLSASDAIFLVGQRALMLEKKCQAGSHKMLAVRASLAQVQEAAGELPYEVACINGQKDTVLSAAKDDIDKLASVLESAGYKCFSLDVAFAFHSAQTDPILDDFESVSRTGVLFQAPNLPVISPLLGKVVFNDKTINANYVRRATRESVDFLSALEAAQKISIIDESTTWIEIGPHPVCMGFIRSAVPSIKVASPSIRRGENNWQTLVQTLGALHLAGIPVDWNEYHRPFEQALRLLDLPTYSWNDKTYWIQYNGDWALTKGNTFYDAEKAAKAPRVGGDLPPSPISTSTVHRVIGETFDGTAGTVDIQSDLMQQDFHDAAYGHKMNNCGVVTSSIHADIVYTIGRYLHTKLKPGVKDIHMNISNLEVVKGLVAQKNRDVPQLIQVSISTEDISSGTAQVTWFNVLPDGGLDEPFATATLFYGKANDWLQSWIPTTHLVLGRVHELERLAEQGVANRFSRNMAYGLFARNLVDYADKYRGMQSVVLHGLEAFADVELTKEKGGTWTVPPFFIDSVAHLAGFIMNVSDAVDTANNFCVTPGWESMRFARPLLAGARYRSYVKMIPTEEDAGVFLGDVYIFQDNKIIGQVRGIKFRRYPRLLLDRFFSAPDAAKHGGKHAPAVKAAIPPALEKKSAVVVAQVPVVDKPPPTKENAVAAPAAKSPEPVAAAAVNEDSITVKAMALVAAEAALDVSELEDDVQFANIGVDSLMSLVIAEKFRETLGVTISGSLFLEYPAVGDLRAWLLEYYG</sequence>